<proteinExistence type="evidence at protein level"/>
<comment type="similarity">
    <text evidence="4">Belongs to the universal ribosomal protein uL1 family. Highly divergent.</text>
</comment>
<dbReference type="EMBL" id="AE014134">
    <property type="protein sequence ID" value="AAF52687.1"/>
    <property type="molecule type" value="Genomic_DNA"/>
</dbReference>
<dbReference type="EMBL" id="AY069795">
    <property type="protein sequence ID" value="AAL39940.1"/>
    <property type="molecule type" value="mRNA"/>
</dbReference>
<dbReference type="RefSeq" id="NP_001285757.1">
    <property type="nucleotide sequence ID" value="NM_001298828.1"/>
</dbReference>
<dbReference type="RefSeq" id="NP_609236.2">
    <property type="nucleotide sequence ID" value="NM_135392.5"/>
</dbReference>
<dbReference type="SMR" id="Q9VLK2"/>
<dbReference type="BioGRID" id="60303">
    <property type="interactions" value="13"/>
</dbReference>
<dbReference type="FunCoup" id="Q9VLK2">
    <property type="interactions" value="72"/>
</dbReference>
<dbReference type="IntAct" id="Q9VLK2">
    <property type="interactions" value="42"/>
</dbReference>
<dbReference type="STRING" id="7227.FBpp0310071"/>
<dbReference type="iPTMnet" id="Q9VLK2"/>
<dbReference type="PaxDb" id="7227-FBpp0079306"/>
<dbReference type="DNASU" id="34183"/>
<dbReference type="EnsemblMetazoa" id="FBtr0079698">
    <property type="protein sequence ID" value="FBpp0079306"/>
    <property type="gene ID" value="FBgn0032050"/>
</dbReference>
<dbReference type="EnsemblMetazoa" id="FBtr0343426">
    <property type="protein sequence ID" value="FBpp0310071"/>
    <property type="gene ID" value="FBgn0032050"/>
</dbReference>
<dbReference type="GeneID" id="34183"/>
<dbReference type="KEGG" id="dme:Dmel_CG13096"/>
<dbReference type="UCSC" id="CG13096-RA">
    <property type="organism name" value="d. melanogaster"/>
</dbReference>
<dbReference type="AGR" id="FB:FBgn0032050"/>
<dbReference type="FlyBase" id="FBgn0032050">
    <property type="gene designation" value="CG13096"/>
</dbReference>
<dbReference type="VEuPathDB" id="VectorBase:FBgn0032050"/>
<dbReference type="eggNOG" id="KOG1685">
    <property type="taxonomic scope" value="Eukaryota"/>
</dbReference>
<dbReference type="GeneTree" id="ENSGT00940000172504"/>
<dbReference type="HOGENOM" id="CLU_420512_0_0_1"/>
<dbReference type="InParanoid" id="Q9VLK2"/>
<dbReference type="OMA" id="CAPPADT"/>
<dbReference type="OrthoDB" id="10251727at2759"/>
<dbReference type="PhylomeDB" id="Q9VLK2"/>
<dbReference type="BioGRID-ORCS" id="34183">
    <property type="hits" value="0 hits in 1 CRISPR screen"/>
</dbReference>
<dbReference type="ChiTaRS" id="CG13096">
    <property type="organism name" value="fly"/>
</dbReference>
<dbReference type="GenomeRNAi" id="34183"/>
<dbReference type="PRO" id="PR:Q9VLK2"/>
<dbReference type="Proteomes" id="UP000000803">
    <property type="component" value="Chromosome 2L"/>
</dbReference>
<dbReference type="Bgee" id="FBgn0032050">
    <property type="expression patterns" value="Expressed in posterior terminal follicle cell in ovary and 115 other cell types or tissues"/>
</dbReference>
<dbReference type="ExpressionAtlas" id="Q9VLK2">
    <property type="expression patterns" value="baseline and differential"/>
</dbReference>
<dbReference type="CDD" id="cd00403">
    <property type="entry name" value="Ribosomal_L1"/>
    <property type="match status" value="1"/>
</dbReference>
<dbReference type="Gene3D" id="3.30.190.20">
    <property type="match status" value="1"/>
</dbReference>
<dbReference type="InterPro" id="IPR053110">
    <property type="entry name" value="Ribosomal_L1-TF"/>
</dbReference>
<dbReference type="InterPro" id="IPR023674">
    <property type="entry name" value="Ribosomal_uL1-like"/>
</dbReference>
<dbReference type="InterPro" id="IPR028364">
    <property type="entry name" value="Ribosomal_uL1/biogenesis"/>
</dbReference>
<dbReference type="PANTHER" id="PTHR48162:SF1">
    <property type="entry name" value="RIBOSOMAL L1 DOMAIN-CONTAINING PROTEIN CG13096"/>
    <property type="match status" value="1"/>
</dbReference>
<dbReference type="PANTHER" id="PTHR48162">
    <property type="entry name" value="YALI0A06930P"/>
    <property type="match status" value="1"/>
</dbReference>
<dbReference type="Pfam" id="PF00687">
    <property type="entry name" value="Ribosomal_L1"/>
    <property type="match status" value="1"/>
</dbReference>
<dbReference type="SUPFAM" id="SSF56808">
    <property type="entry name" value="Ribosomal protein L1"/>
    <property type="match status" value="1"/>
</dbReference>
<evidence type="ECO:0000256" key="1">
    <source>
        <dbReference type="SAM" id="MobiDB-lite"/>
    </source>
</evidence>
<evidence type="ECO:0000269" key="2">
    <source>
    </source>
</evidence>
<evidence type="ECO:0000269" key="3">
    <source>
    </source>
</evidence>
<evidence type="ECO:0000305" key="4"/>
<sequence length="681" mass="74364">MVKVQKPQPKSLNKSASIEGVVKKKGKPEKTKKLATDATLELASNKKAKNAAPVKKDAIKKEPEVSKKGAEKKQSKAAKRPLILAPPESPAAPAPAAKKSKAKPAASGAPVGKKIEAKKPLILAPPESPVPPKKQEKKTKAAPVKAKKEPAPAKKSVQDPVPSIKKVPAAKKSGQTAALTKKTAKTEKQAAPAKPAKAQPASQLQKKAKAVQKLSKPASPPKSKKALSKSKPGQAKGNAVNKEPAKSKKPVELTFELKAFDEKRFHEIVNENNVTKVCAALKSVVSEEVEKKKNTSIFSDYRYVLQVCSYKIPSCPKRMVKLNLKHSLVGKDDDVALIVPDLQRGAKFDYDPTKQHYEDMLREAGVKQRLTVVPFNQLRNEMGSFEAKRKFLNSYDYLLCDGRLSGQATAFLGKNTQKPRNVLHSLRLSKDNDKLPQEVTRALTRTAFRQLSKGDLIAVPVGNHEITAEQLAENILLVIKQLQEVYPGGLANIRSMYLKIDITGTSALPLYVSMCAPPEDVPYVVGPREQRMLKLKKQANEVLSKFAMTKDAEFIKLTSDQVKRKAQLRKEKAALLAADAAPKDNDGGDAAVPAKKARKESSSEGAKADAESDEEEEVEEAEDSAGESGDEDEEGHDGDDTDEDEDEDDDDDNEDGDDDEDEDDDEEDDDEEDDDDDDDEE</sequence>
<keyword id="KW-0597">Phosphoprotein</keyword>
<keyword id="KW-1185">Reference proteome</keyword>
<accession>Q9VLK2</accession>
<accession>Q8T9F1</accession>
<name>Y3096_DROME</name>
<reference key="1">
    <citation type="journal article" date="2000" name="Science">
        <title>The genome sequence of Drosophila melanogaster.</title>
        <authorList>
            <person name="Adams M.D."/>
            <person name="Celniker S.E."/>
            <person name="Holt R.A."/>
            <person name="Evans C.A."/>
            <person name="Gocayne J.D."/>
            <person name="Amanatides P.G."/>
            <person name="Scherer S.E."/>
            <person name="Li P.W."/>
            <person name="Hoskins R.A."/>
            <person name="Galle R.F."/>
            <person name="George R.A."/>
            <person name="Lewis S.E."/>
            <person name="Richards S."/>
            <person name="Ashburner M."/>
            <person name="Henderson S.N."/>
            <person name="Sutton G.G."/>
            <person name="Wortman J.R."/>
            <person name="Yandell M.D."/>
            <person name="Zhang Q."/>
            <person name="Chen L.X."/>
            <person name="Brandon R.C."/>
            <person name="Rogers Y.-H.C."/>
            <person name="Blazej R.G."/>
            <person name="Champe M."/>
            <person name="Pfeiffer B.D."/>
            <person name="Wan K.H."/>
            <person name="Doyle C."/>
            <person name="Baxter E.G."/>
            <person name="Helt G."/>
            <person name="Nelson C.R."/>
            <person name="Miklos G.L.G."/>
            <person name="Abril J.F."/>
            <person name="Agbayani A."/>
            <person name="An H.-J."/>
            <person name="Andrews-Pfannkoch C."/>
            <person name="Baldwin D."/>
            <person name="Ballew R.M."/>
            <person name="Basu A."/>
            <person name="Baxendale J."/>
            <person name="Bayraktaroglu L."/>
            <person name="Beasley E.M."/>
            <person name="Beeson K.Y."/>
            <person name="Benos P.V."/>
            <person name="Berman B.P."/>
            <person name="Bhandari D."/>
            <person name="Bolshakov S."/>
            <person name="Borkova D."/>
            <person name="Botchan M.R."/>
            <person name="Bouck J."/>
            <person name="Brokstein P."/>
            <person name="Brottier P."/>
            <person name="Burtis K.C."/>
            <person name="Busam D.A."/>
            <person name="Butler H."/>
            <person name="Cadieu E."/>
            <person name="Center A."/>
            <person name="Chandra I."/>
            <person name="Cherry J.M."/>
            <person name="Cawley S."/>
            <person name="Dahlke C."/>
            <person name="Davenport L.B."/>
            <person name="Davies P."/>
            <person name="de Pablos B."/>
            <person name="Delcher A."/>
            <person name="Deng Z."/>
            <person name="Mays A.D."/>
            <person name="Dew I."/>
            <person name="Dietz S.M."/>
            <person name="Dodson K."/>
            <person name="Doup L.E."/>
            <person name="Downes M."/>
            <person name="Dugan-Rocha S."/>
            <person name="Dunkov B.C."/>
            <person name="Dunn P."/>
            <person name="Durbin K.J."/>
            <person name="Evangelista C.C."/>
            <person name="Ferraz C."/>
            <person name="Ferriera S."/>
            <person name="Fleischmann W."/>
            <person name="Fosler C."/>
            <person name="Gabrielian A.E."/>
            <person name="Garg N.S."/>
            <person name="Gelbart W.M."/>
            <person name="Glasser K."/>
            <person name="Glodek A."/>
            <person name="Gong F."/>
            <person name="Gorrell J.H."/>
            <person name="Gu Z."/>
            <person name="Guan P."/>
            <person name="Harris M."/>
            <person name="Harris N.L."/>
            <person name="Harvey D.A."/>
            <person name="Heiman T.J."/>
            <person name="Hernandez J.R."/>
            <person name="Houck J."/>
            <person name="Hostin D."/>
            <person name="Houston K.A."/>
            <person name="Howland T.J."/>
            <person name="Wei M.-H."/>
            <person name="Ibegwam C."/>
            <person name="Jalali M."/>
            <person name="Kalush F."/>
            <person name="Karpen G.H."/>
            <person name="Ke Z."/>
            <person name="Kennison J.A."/>
            <person name="Ketchum K.A."/>
            <person name="Kimmel B.E."/>
            <person name="Kodira C.D."/>
            <person name="Kraft C.L."/>
            <person name="Kravitz S."/>
            <person name="Kulp D."/>
            <person name="Lai Z."/>
            <person name="Lasko P."/>
            <person name="Lei Y."/>
            <person name="Levitsky A.A."/>
            <person name="Li J.H."/>
            <person name="Li Z."/>
            <person name="Liang Y."/>
            <person name="Lin X."/>
            <person name="Liu X."/>
            <person name="Mattei B."/>
            <person name="McIntosh T.C."/>
            <person name="McLeod M.P."/>
            <person name="McPherson D."/>
            <person name="Merkulov G."/>
            <person name="Milshina N.V."/>
            <person name="Mobarry C."/>
            <person name="Morris J."/>
            <person name="Moshrefi A."/>
            <person name="Mount S.M."/>
            <person name="Moy M."/>
            <person name="Murphy B."/>
            <person name="Murphy L."/>
            <person name="Muzny D.M."/>
            <person name="Nelson D.L."/>
            <person name="Nelson D.R."/>
            <person name="Nelson K.A."/>
            <person name="Nixon K."/>
            <person name="Nusskern D.R."/>
            <person name="Pacleb J.M."/>
            <person name="Palazzolo M."/>
            <person name="Pittman G.S."/>
            <person name="Pan S."/>
            <person name="Pollard J."/>
            <person name="Puri V."/>
            <person name="Reese M.G."/>
            <person name="Reinert K."/>
            <person name="Remington K."/>
            <person name="Saunders R.D.C."/>
            <person name="Scheeler F."/>
            <person name="Shen H."/>
            <person name="Shue B.C."/>
            <person name="Siden-Kiamos I."/>
            <person name="Simpson M."/>
            <person name="Skupski M.P."/>
            <person name="Smith T.J."/>
            <person name="Spier E."/>
            <person name="Spradling A.C."/>
            <person name="Stapleton M."/>
            <person name="Strong R."/>
            <person name="Sun E."/>
            <person name="Svirskas R."/>
            <person name="Tector C."/>
            <person name="Turner R."/>
            <person name="Venter E."/>
            <person name="Wang A.H."/>
            <person name="Wang X."/>
            <person name="Wang Z.-Y."/>
            <person name="Wassarman D.A."/>
            <person name="Weinstock G.M."/>
            <person name="Weissenbach J."/>
            <person name="Williams S.M."/>
            <person name="Woodage T."/>
            <person name="Worley K.C."/>
            <person name="Wu D."/>
            <person name="Yang S."/>
            <person name="Yao Q.A."/>
            <person name="Ye J."/>
            <person name="Yeh R.-F."/>
            <person name="Zaveri J.S."/>
            <person name="Zhan M."/>
            <person name="Zhang G."/>
            <person name="Zhao Q."/>
            <person name="Zheng L."/>
            <person name="Zheng X.H."/>
            <person name="Zhong F.N."/>
            <person name="Zhong W."/>
            <person name="Zhou X."/>
            <person name="Zhu S.C."/>
            <person name="Zhu X."/>
            <person name="Smith H.O."/>
            <person name="Gibbs R.A."/>
            <person name="Myers E.W."/>
            <person name="Rubin G.M."/>
            <person name="Venter J.C."/>
        </authorList>
    </citation>
    <scope>NUCLEOTIDE SEQUENCE [LARGE SCALE GENOMIC DNA]</scope>
    <source>
        <strain>Berkeley</strain>
    </source>
</reference>
<reference key="2">
    <citation type="journal article" date="2002" name="Genome Biol.">
        <title>Annotation of the Drosophila melanogaster euchromatic genome: a systematic review.</title>
        <authorList>
            <person name="Misra S."/>
            <person name="Crosby M.A."/>
            <person name="Mungall C.J."/>
            <person name="Matthews B.B."/>
            <person name="Campbell K.S."/>
            <person name="Hradecky P."/>
            <person name="Huang Y."/>
            <person name="Kaminker J.S."/>
            <person name="Millburn G.H."/>
            <person name="Prochnik S.E."/>
            <person name="Smith C.D."/>
            <person name="Tupy J.L."/>
            <person name="Whitfield E.J."/>
            <person name="Bayraktaroglu L."/>
            <person name="Berman B.P."/>
            <person name="Bettencourt B.R."/>
            <person name="Celniker S.E."/>
            <person name="de Grey A.D.N.J."/>
            <person name="Drysdale R.A."/>
            <person name="Harris N.L."/>
            <person name="Richter J."/>
            <person name="Russo S."/>
            <person name="Schroeder A.J."/>
            <person name="Shu S.Q."/>
            <person name="Stapleton M."/>
            <person name="Yamada C."/>
            <person name="Ashburner M."/>
            <person name="Gelbart W.M."/>
            <person name="Rubin G.M."/>
            <person name="Lewis S.E."/>
        </authorList>
    </citation>
    <scope>GENOME REANNOTATION</scope>
    <source>
        <strain>Berkeley</strain>
    </source>
</reference>
<reference key="3">
    <citation type="journal article" date="2002" name="Genome Biol.">
        <title>A Drosophila full-length cDNA resource.</title>
        <authorList>
            <person name="Stapleton M."/>
            <person name="Carlson J.W."/>
            <person name="Brokstein P."/>
            <person name="Yu C."/>
            <person name="Champe M."/>
            <person name="George R.A."/>
            <person name="Guarin H."/>
            <person name="Kronmiller B."/>
            <person name="Pacleb J.M."/>
            <person name="Park S."/>
            <person name="Wan K.H."/>
            <person name="Rubin G.M."/>
            <person name="Celniker S.E."/>
        </authorList>
    </citation>
    <scope>NUCLEOTIDE SEQUENCE [LARGE SCALE MRNA]</scope>
    <source>
        <strain>Berkeley</strain>
        <tissue>Embryo</tissue>
    </source>
</reference>
<reference key="4">
    <citation type="journal article" date="2007" name="Mol. Biosyst.">
        <title>An integrated chemical, mass spectrometric and computational strategy for (quantitative) phosphoproteomics: application to Drosophila melanogaster Kc167 cells.</title>
        <authorList>
            <person name="Bodenmiller B."/>
            <person name="Mueller L.N."/>
            <person name="Pedrioli P.G.A."/>
            <person name="Pflieger D."/>
            <person name="Juenger M.A."/>
            <person name="Eng J.K."/>
            <person name="Aebersold R."/>
            <person name="Tao W.A."/>
        </authorList>
    </citation>
    <scope>PHOSPHORYLATION [LARGE SCALE ANALYSIS] AT SER-89 AND SER-128</scope>
    <scope>IDENTIFICATION BY MASS SPECTROMETRY</scope>
</reference>
<reference key="5">
    <citation type="journal article" date="2008" name="J. Proteome Res.">
        <title>Phosphoproteome analysis of Drosophila melanogaster embryos.</title>
        <authorList>
            <person name="Zhai B."/>
            <person name="Villen J."/>
            <person name="Beausoleil S.A."/>
            <person name="Mintseris J."/>
            <person name="Gygi S.P."/>
        </authorList>
    </citation>
    <scope>PHOSPHORYLATION [LARGE SCALE ANALYSIS] AT SER-15 AND SER-17</scope>
    <scope>IDENTIFICATION BY MASS SPECTROMETRY</scope>
    <source>
        <tissue>Embryo</tissue>
    </source>
</reference>
<protein>
    <recommendedName>
        <fullName>Ribosomal L1 domain-containing protein CG13096</fullName>
    </recommendedName>
</protein>
<feature type="chain" id="PRO_0000372860" description="Ribosomal L1 domain-containing protein CG13096">
    <location>
        <begin position="1"/>
        <end position="681"/>
    </location>
</feature>
<feature type="region of interest" description="Disordered" evidence="1">
    <location>
        <begin position="1"/>
        <end position="248"/>
    </location>
</feature>
<feature type="region of interest" description="Disordered" evidence="1">
    <location>
        <begin position="579"/>
        <end position="681"/>
    </location>
</feature>
<feature type="compositionally biased region" description="Basic and acidic residues" evidence="1">
    <location>
        <begin position="54"/>
        <end position="74"/>
    </location>
</feature>
<feature type="compositionally biased region" description="Low complexity" evidence="1">
    <location>
        <begin position="103"/>
        <end position="112"/>
    </location>
</feature>
<feature type="compositionally biased region" description="Low complexity" evidence="1">
    <location>
        <begin position="189"/>
        <end position="217"/>
    </location>
</feature>
<feature type="compositionally biased region" description="Basic and acidic residues" evidence="1">
    <location>
        <begin position="599"/>
        <end position="610"/>
    </location>
</feature>
<feature type="compositionally biased region" description="Acidic residues" evidence="1">
    <location>
        <begin position="611"/>
        <end position="681"/>
    </location>
</feature>
<feature type="modified residue" description="Phosphoserine" evidence="3">
    <location>
        <position position="15"/>
    </location>
</feature>
<feature type="modified residue" description="Phosphoserine" evidence="3">
    <location>
        <position position="17"/>
    </location>
</feature>
<feature type="modified residue" description="Phosphoserine" evidence="2">
    <location>
        <position position="89"/>
    </location>
</feature>
<feature type="modified residue" description="Phosphoserine" evidence="2">
    <location>
        <position position="128"/>
    </location>
</feature>
<feature type="sequence conflict" description="In Ref. 3; AAL39940." evidence="4" ref="3">
    <original>K</original>
    <variation>N</variation>
    <location>
        <position position="23"/>
    </location>
</feature>
<organism>
    <name type="scientific">Drosophila melanogaster</name>
    <name type="common">Fruit fly</name>
    <dbReference type="NCBI Taxonomy" id="7227"/>
    <lineage>
        <taxon>Eukaryota</taxon>
        <taxon>Metazoa</taxon>
        <taxon>Ecdysozoa</taxon>
        <taxon>Arthropoda</taxon>
        <taxon>Hexapoda</taxon>
        <taxon>Insecta</taxon>
        <taxon>Pterygota</taxon>
        <taxon>Neoptera</taxon>
        <taxon>Endopterygota</taxon>
        <taxon>Diptera</taxon>
        <taxon>Brachycera</taxon>
        <taxon>Muscomorpha</taxon>
        <taxon>Ephydroidea</taxon>
        <taxon>Drosophilidae</taxon>
        <taxon>Drosophila</taxon>
        <taxon>Sophophora</taxon>
    </lineage>
</organism>
<gene>
    <name type="ORF">CG13096</name>
</gene>